<comment type="function">
    <text evidence="1">Catalyzes the reversible conversion of 2-phosphoglycerate (2-PG) into phosphoenolpyruvate (PEP). It is essential for the degradation of carbohydrates via glycolysis.</text>
</comment>
<comment type="catalytic activity">
    <reaction evidence="1">
        <text>(2R)-2-phosphoglycerate = phosphoenolpyruvate + H2O</text>
        <dbReference type="Rhea" id="RHEA:10164"/>
        <dbReference type="ChEBI" id="CHEBI:15377"/>
        <dbReference type="ChEBI" id="CHEBI:58289"/>
        <dbReference type="ChEBI" id="CHEBI:58702"/>
        <dbReference type="EC" id="4.2.1.11"/>
    </reaction>
</comment>
<comment type="cofactor">
    <cofactor evidence="1">
        <name>Mg(2+)</name>
        <dbReference type="ChEBI" id="CHEBI:18420"/>
    </cofactor>
    <text evidence="1">Binds a second Mg(2+) ion via substrate during catalysis.</text>
</comment>
<comment type="pathway">
    <text evidence="1">Carbohydrate degradation; glycolysis; pyruvate from D-glyceraldehyde 3-phosphate: step 4/5.</text>
</comment>
<comment type="subcellular location">
    <subcellularLocation>
        <location evidence="1">Cytoplasm</location>
    </subcellularLocation>
    <subcellularLocation>
        <location evidence="1">Secreted</location>
    </subcellularLocation>
    <subcellularLocation>
        <location evidence="1">Cell surface</location>
    </subcellularLocation>
    <text evidence="1">Fractions of enolase are present in both the cytoplasm and on the cell surface.</text>
</comment>
<comment type="similarity">
    <text evidence="1">Belongs to the enolase family.</text>
</comment>
<proteinExistence type="inferred from homology"/>
<reference key="1">
    <citation type="submission" date="2007-06" db="EMBL/GenBank/DDBJ databases">
        <title>Complete sequence of Sinorhizobium medicae WSM419 chromosome.</title>
        <authorList>
            <consortium name="US DOE Joint Genome Institute"/>
            <person name="Copeland A."/>
            <person name="Lucas S."/>
            <person name="Lapidus A."/>
            <person name="Barry K."/>
            <person name="Glavina del Rio T."/>
            <person name="Dalin E."/>
            <person name="Tice H."/>
            <person name="Pitluck S."/>
            <person name="Chain P."/>
            <person name="Malfatti S."/>
            <person name="Shin M."/>
            <person name="Vergez L."/>
            <person name="Schmutz J."/>
            <person name="Larimer F."/>
            <person name="Land M."/>
            <person name="Hauser L."/>
            <person name="Kyrpides N."/>
            <person name="Mikhailova N."/>
            <person name="Reeve W.G."/>
            <person name="Richardson P."/>
        </authorList>
    </citation>
    <scope>NUCLEOTIDE SEQUENCE [LARGE SCALE GENOMIC DNA]</scope>
    <source>
        <strain>WSM419</strain>
    </source>
</reference>
<organism>
    <name type="scientific">Sinorhizobium medicae (strain WSM419)</name>
    <name type="common">Ensifer medicae</name>
    <dbReference type="NCBI Taxonomy" id="366394"/>
    <lineage>
        <taxon>Bacteria</taxon>
        <taxon>Pseudomonadati</taxon>
        <taxon>Pseudomonadota</taxon>
        <taxon>Alphaproteobacteria</taxon>
        <taxon>Hyphomicrobiales</taxon>
        <taxon>Rhizobiaceae</taxon>
        <taxon>Sinorhizobium/Ensifer group</taxon>
        <taxon>Sinorhizobium</taxon>
    </lineage>
</organism>
<protein>
    <recommendedName>
        <fullName evidence="1">Enolase</fullName>
        <ecNumber evidence="1">4.2.1.11</ecNumber>
    </recommendedName>
    <alternativeName>
        <fullName evidence="1">2-phospho-D-glycerate hydro-lyase</fullName>
    </alternativeName>
    <alternativeName>
        <fullName evidence="1">2-phosphoglycerate dehydratase</fullName>
    </alternativeName>
</protein>
<feature type="chain" id="PRO_1000019250" description="Enolase">
    <location>
        <begin position="1"/>
        <end position="424"/>
    </location>
</feature>
<feature type="active site" description="Proton donor" evidence="1">
    <location>
        <position position="204"/>
    </location>
</feature>
<feature type="active site" description="Proton acceptor" evidence="1">
    <location>
        <position position="336"/>
    </location>
</feature>
<feature type="binding site" evidence="1">
    <location>
        <position position="162"/>
    </location>
    <ligand>
        <name>(2R)-2-phosphoglycerate</name>
        <dbReference type="ChEBI" id="CHEBI:58289"/>
    </ligand>
</feature>
<feature type="binding site" evidence="1">
    <location>
        <position position="241"/>
    </location>
    <ligand>
        <name>Mg(2+)</name>
        <dbReference type="ChEBI" id="CHEBI:18420"/>
    </ligand>
</feature>
<feature type="binding site" evidence="1">
    <location>
        <position position="284"/>
    </location>
    <ligand>
        <name>Mg(2+)</name>
        <dbReference type="ChEBI" id="CHEBI:18420"/>
    </ligand>
</feature>
<feature type="binding site" evidence="1">
    <location>
        <position position="311"/>
    </location>
    <ligand>
        <name>Mg(2+)</name>
        <dbReference type="ChEBI" id="CHEBI:18420"/>
    </ligand>
</feature>
<feature type="binding site" evidence="1">
    <location>
        <position position="336"/>
    </location>
    <ligand>
        <name>(2R)-2-phosphoglycerate</name>
        <dbReference type="ChEBI" id="CHEBI:58289"/>
    </ligand>
</feature>
<feature type="binding site" evidence="1">
    <location>
        <position position="365"/>
    </location>
    <ligand>
        <name>(2R)-2-phosphoglycerate</name>
        <dbReference type="ChEBI" id="CHEBI:58289"/>
    </ligand>
</feature>
<feature type="binding site" evidence="1">
    <location>
        <position position="366"/>
    </location>
    <ligand>
        <name>(2R)-2-phosphoglycerate</name>
        <dbReference type="ChEBI" id="CHEBI:58289"/>
    </ligand>
</feature>
<feature type="binding site" evidence="1">
    <location>
        <position position="387"/>
    </location>
    <ligand>
        <name>(2R)-2-phosphoglycerate</name>
        <dbReference type="ChEBI" id="CHEBI:58289"/>
    </ligand>
</feature>
<accession>A6U8E5</accession>
<dbReference type="EC" id="4.2.1.11" evidence="1"/>
<dbReference type="EMBL" id="CP000738">
    <property type="protein sequence ID" value="ABR59925.1"/>
    <property type="molecule type" value="Genomic_DNA"/>
</dbReference>
<dbReference type="RefSeq" id="WP_011975249.1">
    <property type="nucleotide sequence ID" value="NC_009636.1"/>
</dbReference>
<dbReference type="RefSeq" id="YP_001326760.1">
    <property type="nucleotide sequence ID" value="NC_009636.1"/>
</dbReference>
<dbReference type="SMR" id="A6U8E5"/>
<dbReference type="STRING" id="366394.Smed_1072"/>
<dbReference type="GeneID" id="61612144"/>
<dbReference type="KEGG" id="smd:Smed_1072"/>
<dbReference type="PATRIC" id="fig|366394.8.peg.4195"/>
<dbReference type="eggNOG" id="COG0148">
    <property type="taxonomic scope" value="Bacteria"/>
</dbReference>
<dbReference type="HOGENOM" id="CLU_031223_2_1_5"/>
<dbReference type="OrthoDB" id="9804716at2"/>
<dbReference type="UniPathway" id="UPA00109">
    <property type="reaction ID" value="UER00187"/>
</dbReference>
<dbReference type="Proteomes" id="UP000001108">
    <property type="component" value="Chromosome"/>
</dbReference>
<dbReference type="GO" id="GO:0009986">
    <property type="term" value="C:cell surface"/>
    <property type="evidence" value="ECO:0007669"/>
    <property type="project" value="UniProtKB-SubCell"/>
</dbReference>
<dbReference type="GO" id="GO:0005576">
    <property type="term" value="C:extracellular region"/>
    <property type="evidence" value="ECO:0007669"/>
    <property type="project" value="UniProtKB-SubCell"/>
</dbReference>
<dbReference type="GO" id="GO:0000015">
    <property type="term" value="C:phosphopyruvate hydratase complex"/>
    <property type="evidence" value="ECO:0007669"/>
    <property type="project" value="InterPro"/>
</dbReference>
<dbReference type="GO" id="GO:0000287">
    <property type="term" value="F:magnesium ion binding"/>
    <property type="evidence" value="ECO:0007669"/>
    <property type="project" value="UniProtKB-UniRule"/>
</dbReference>
<dbReference type="GO" id="GO:0004634">
    <property type="term" value="F:phosphopyruvate hydratase activity"/>
    <property type="evidence" value="ECO:0007669"/>
    <property type="project" value="UniProtKB-UniRule"/>
</dbReference>
<dbReference type="GO" id="GO:0006096">
    <property type="term" value="P:glycolytic process"/>
    <property type="evidence" value="ECO:0007669"/>
    <property type="project" value="UniProtKB-UniRule"/>
</dbReference>
<dbReference type="CDD" id="cd03313">
    <property type="entry name" value="enolase"/>
    <property type="match status" value="1"/>
</dbReference>
<dbReference type="FunFam" id="3.20.20.120:FF:000001">
    <property type="entry name" value="Enolase"/>
    <property type="match status" value="1"/>
</dbReference>
<dbReference type="FunFam" id="3.30.390.10:FF:000001">
    <property type="entry name" value="Enolase"/>
    <property type="match status" value="1"/>
</dbReference>
<dbReference type="Gene3D" id="3.20.20.120">
    <property type="entry name" value="Enolase-like C-terminal domain"/>
    <property type="match status" value="1"/>
</dbReference>
<dbReference type="Gene3D" id="3.30.390.10">
    <property type="entry name" value="Enolase-like, N-terminal domain"/>
    <property type="match status" value="1"/>
</dbReference>
<dbReference type="HAMAP" id="MF_00318">
    <property type="entry name" value="Enolase"/>
    <property type="match status" value="1"/>
</dbReference>
<dbReference type="InterPro" id="IPR000941">
    <property type="entry name" value="Enolase"/>
</dbReference>
<dbReference type="InterPro" id="IPR036849">
    <property type="entry name" value="Enolase-like_C_sf"/>
</dbReference>
<dbReference type="InterPro" id="IPR029017">
    <property type="entry name" value="Enolase-like_N"/>
</dbReference>
<dbReference type="InterPro" id="IPR020810">
    <property type="entry name" value="Enolase_C"/>
</dbReference>
<dbReference type="InterPro" id="IPR020809">
    <property type="entry name" value="Enolase_CS"/>
</dbReference>
<dbReference type="InterPro" id="IPR020811">
    <property type="entry name" value="Enolase_N"/>
</dbReference>
<dbReference type="NCBIfam" id="TIGR01060">
    <property type="entry name" value="eno"/>
    <property type="match status" value="1"/>
</dbReference>
<dbReference type="PANTHER" id="PTHR11902">
    <property type="entry name" value="ENOLASE"/>
    <property type="match status" value="1"/>
</dbReference>
<dbReference type="PANTHER" id="PTHR11902:SF1">
    <property type="entry name" value="ENOLASE"/>
    <property type="match status" value="1"/>
</dbReference>
<dbReference type="Pfam" id="PF00113">
    <property type="entry name" value="Enolase_C"/>
    <property type="match status" value="1"/>
</dbReference>
<dbReference type="Pfam" id="PF03952">
    <property type="entry name" value="Enolase_N"/>
    <property type="match status" value="1"/>
</dbReference>
<dbReference type="PIRSF" id="PIRSF001400">
    <property type="entry name" value="Enolase"/>
    <property type="match status" value="1"/>
</dbReference>
<dbReference type="PRINTS" id="PR00148">
    <property type="entry name" value="ENOLASE"/>
</dbReference>
<dbReference type="SFLD" id="SFLDS00001">
    <property type="entry name" value="Enolase"/>
    <property type="match status" value="1"/>
</dbReference>
<dbReference type="SFLD" id="SFLDF00002">
    <property type="entry name" value="enolase"/>
    <property type="match status" value="1"/>
</dbReference>
<dbReference type="SMART" id="SM01192">
    <property type="entry name" value="Enolase_C"/>
    <property type="match status" value="1"/>
</dbReference>
<dbReference type="SMART" id="SM01193">
    <property type="entry name" value="Enolase_N"/>
    <property type="match status" value="1"/>
</dbReference>
<dbReference type="SUPFAM" id="SSF51604">
    <property type="entry name" value="Enolase C-terminal domain-like"/>
    <property type="match status" value="1"/>
</dbReference>
<dbReference type="SUPFAM" id="SSF54826">
    <property type="entry name" value="Enolase N-terminal domain-like"/>
    <property type="match status" value="1"/>
</dbReference>
<dbReference type="PROSITE" id="PS00164">
    <property type="entry name" value="ENOLASE"/>
    <property type="match status" value="1"/>
</dbReference>
<keyword id="KW-0963">Cytoplasm</keyword>
<keyword id="KW-0324">Glycolysis</keyword>
<keyword id="KW-0456">Lyase</keyword>
<keyword id="KW-0460">Magnesium</keyword>
<keyword id="KW-0479">Metal-binding</keyword>
<keyword id="KW-0964">Secreted</keyword>
<evidence type="ECO:0000255" key="1">
    <source>
        <dbReference type="HAMAP-Rule" id="MF_00318"/>
    </source>
</evidence>
<gene>
    <name evidence="1" type="primary">eno</name>
    <name type="ordered locus">Smed_1072</name>
</gene>
<name>ENO_SINMW</name>
<sequence>MTAIIDIIGREILDSRGNPTVEVDVHLEDGSFGRAAVPSGASTGAHEAVELRDGGTRYLGKGVERAVDAVNGEIFEAIGGLDAENQIQIDRTMFELDGTPNKSRLGANAILGVSLAVAKAAAEAAGLPLYRYVGGPNAHLLPVPMMNIINGGAHADNPIDFQEFMIMPVGAETLKDAVRMGSEVFHTLKKQLAADGHNTNVGDEGGFAPGLASAPAALDFIMKSIEKAGYRPGEDMYVALDCASTEFFKDGKYVLEGEGRTLEPGAMAEYLAELAGKYPIVSIEDGMAEDDWDGWKALTDLIGNKCQLVGDDLFVTNSARLRDGIKMGVANSILVKVNQIGSLSETLDAVETAHKARYTAVMSHRSGETEDSTIADLAVATNCGQIKTGSLARSDRLAKYNQLIRIEEQLGPQAQYAGRSILRG</sequence>